<protein>
    <recommendedName>
        <fullName>Phosphate propanoyltransferase</fullName>
        <ecNumber>2.3.1.222</ecNumber>
    </recommendedName>
    <alternativeName>
        <fullName>Phosphate acyltransferase PduL</fullName>
    </alternativeName>
    <alternativeName>
        <fullName>Phosphotransacylase PduL</fullName>
        <shortName>PTAC</shortName>
    </alternativeName>
    <alternativeName>
        <fullName>Propanediol utilization protein PduL</fullName>
    </alternativeName>
</protein>
<dbReference type="EC" id="2.3.1.222"/>
<dbReference type="EMBL" id="CP000416">
    <property type="protein sequence ID" value="ABJ64685.1"/>
    <property type="molecule type" value="Genomic_DNA"/>
</dbReference>
<dbReference type="RefSeq" id="WP_011668311.1">
    <property type="nucleotide sequence ID" value="NC_008497.1"/>
</dbReference>
<dbReference type="SMR" id="Q03Q37"/>
<dbReference type="STRING" id="387344.LVIS_1608"/>
<dbReference type="KEGG" id="lbr:LVIS_1608"/>
<dbReference type="PATRIC" id="fig|387344.15.peg.1522"/>
<dbReference type="eggNOG" id="COG4869">
    <property type="taxonomic scope" value="Bacteria"/>
</dbReference>
<dbReference type="HOGENOM" id="CLU_080676_1_0_9"/>
<dbReference type="UniPathway" id="UPA00621"/>
<dbReference type="Proteomes" id="UP000001652">
    <property type="component" value="Chromosome"/>
</dbReference>
<dbReference type="GO" id="GO:0031469">
    <property type="term" value="C:bacterial microcompartment"/>
    <property type="evidence" value="ECO:0007669"/>
    <property type="project" value="UniProtKB-SubCell"/>
</dbReference>
<dbReference type="GO" id="GO:0016747">
    <property type="term" value="F:acyltransferase activity, transferring groups other than amino-acyl groups"/>
    <property type="evidence" value="ECO:0007669"/>
    <property type="project" value="InterPro"/>
</dbReference>
<dbReference type="GO" id="GO:0046872">
    <property type="term" value="F:metal ion binding"/>
    <property type="evidence" value="ECO:0007669"/>
    <property type="project" value="UniProtKB-KW"/>
</dbReference>
<dbReference type="GO" id="GO:0051144">
    <property type="term" value="P:propanediol catabolic process"/>
    <property type="evidence" value="ECO:0007669"/>
    <property type="project" value="UniProtKB-UniPathway"/>
</dbReference>
<dbReference type="InterPro" id="IPR008300">
    <property type="entry name" value="PTAC"/>
</dbReference>
<dbReference type="NCBIfam" id="NF011652">
    <property type="entry name" value="PRK15070.1"/>
    <property type="match status" value="1"/>
</dbReference>
<dbReference type="PANTHER" id="PTHR39453">
    <property type="entry name" value="PHOSPHATE PROPANOYLTRANSFERASE"/>
    <property type="match status" value="1"/>
</dbReference>
<dbReference type="PANTHER" id="PTHR39453:SF1">
    <property type="entry name" value="PHOSPHATE PROPANOYLTRANSFERASE"/>
    <property type="match status" value="1"/>
</dbReference>
<dbReference type="Pfam" id="PF06130">
    <property type="entry name" value="PTAC"/>
    <property type="match status" value="1"/>
</dbReference>
<dbReference type="PIRSF" id="PIRSF010130">
    <property type="entry name" value="PduL"/>
    <property type="match status" value="1"/>
</dbReference>
<name>PDUL_LEVBA</name>
<proteinExistence type="inferred from homology"/>
<sequence length="208" mass="22984">MDETALRALIQRIIKEELDPDRIPIGVSNHHIHLTEADFNTLFPNQKMTVLKPLKQPKEFASKQTVDIVGPKGTIKHVRVLGPCRAHSQVEIARSEALNIGVPAPIRLSGHLDGAPSVKLVTPDGEVTVQGVIIAKRHIHMSNEDAKRFGVKLGDTVSVEVQSQDRRTIYNDVICRPREDFVLEMHIDTDEANAANVDGNTFGKIVKA</sequence>
<keyword id="KW-0012">Acyltransferase</keyword>
<keyword id="KW-1283">Bacterial microcompartment</keyword>
<keyword id="KW-0479">Metal-binding</keyword>
<keyword id="KW-1185">Reference proteome</keyword>
<keyword id="KW-0808">Transferase</keyword>
<keyword id="KW-0862">Zinc</keyword>
<organism>
    <name type="scientific">Levilactobacillus brevis (strain ATCC 367 / BCRC 12310 / CIP 105137 / JCM 1170 / LMG 11437 / NCIMB 947 / NCTC 947)</name>
    <name type="common">Lactobacillus brevis</name>
    <dbReference type="NCBI Taxonomy" id="387344"/>
    <lineage>
        <taxon>Bacteria</taxon>
        <taxon>Bacillati</taxon>
        <taxon>Bacillota</taxon>
        <taxon>Bacilli</taxon>
        <taxon>Lactobacillales</taxon>
        <taxon>Lactobacillaceae</taxon>
        <taxon>Levilactobacillus</taxon>
    </lineage>
</organism>
<reference key="1">
    <citation type="journal article" date="2006" name="Proc. Natl. Acad. Sci. U.S.A.">
        <title>Comparative genomics of the lactic acid bacteria.</title>
        <authorList>
            <person name="Makarova K.S."/>
            <person name="Slesarev A."/>
            <person name="Wolf Y.I."/>
            <person name="Sorokin A."/>
            <person name="Mirkin B."/>
            <person name="Koonin E.V."/>
            <person name="Pavlov A."/>
            <person name="Pavlova N."/>
            <person name="Karamychev V."/>
            <person name="Polouchine N."/>
            <person name="Shakhova V."/>
            <person name="Grigoriev I."/>
            <person name="Lou Y."/>
            <person name="Rohksar D."/>
            <person name="Lucas S."/>
            <person name="Huang K."/>
            <person name="Goodstein D.M."/>
            <person name="Hawkins T."/>
            <person name="Plengvidhya V."/>
            <person name="Welker D."/>
            <person name="Hughes J."/>
            <person name="Goh Y."/>
            <person name="Benson A."/>
            <person name="Baldwin K."/>
            <person name="Lee J.-H."/>
            <person name="Diaz-Muniz I."/>
            <person name="Dosti B."/>
            <person name="Smeianov V."/>
            <person name="Wechter W."/>
            <person name="Barabote R."/>
            <person name="Lorca G."/>
            <person name="Altermann E."/>
            <person name="Barrangou R."/>
            <person name="Ganesan B."/>
            <person name="Xie Y."/>
            <person name="Rawsthorne H."/>
            <person name="Tamir D."/>
            <person name="Parker C."/>
            <person name="Breidt F."/>
            <person name="Broadbent J.R."/>
            <person name="Hutkins R."/>
            <person name="O'Sullivan D."/>
            <person name="Steele J."/>
            <person name="Unlu G."/>
            <person name="Saier M.H. Jr."/>
            <person name="Klaenhammer T."/>
            <person name="Richardson P."/>
            <person name="Kozyavkin S."/>
            <person name="Weimer B.C."/>
            <person name="Mills D.A."/>
        </authorList>
    </citation>
    <scope>NUCLEOTIDE SEQUENCE [LARGE SCALE GENOMIC DNA]</scope>
    <source>
        <strain>ATCC 367 / BCRC 12310 / CIP 105137 / JCM 1170 / LMG 11437 / NCIMB 947 / NCTC 947</strain>
    </source>
</reference>
<gene>
    <name type="primary">pduL</name>
    <name type="ordered locus">LVIS_1608</name>
</gene>
<comment type="function">
    <text evidence="2">Involved in 1,2-propanediol (1,2-PD) utilization within the bacterial microcompartment (BMC) dedicated to 1,2-PD degradation by catalyzing the conversion of propanoyl-CoA to propanoyl-phosphate.</text>
</comment>
<comment type="catalytic activity">
    <reaction evidence="2">
        <text>propanoyl-CoA + phosphate = propanoyl phosphate + CoA</text>
        <dbReference type="Rhea" id="RHEA:28046"/>
        <dbReference type="ChEBI" id="CHEBI:43474"/>
        <dbReference type="ChEBI" id="CHEBI:57287"/>
        <dbReference type="ChEBI" id="CHEBI:57392"/>
        <dbReference type="ChEBI" id="CHEBI:58933"/>
        <dbReference type="EC" id="2.3.1.222"/>
    </reaction>
</comment>
<comment type="cofactor">
    <cofactor evidence="1">
        <name>Zn(2+)</name>
        <dbReference type="ChEBI" id="CHEBI:29105"/>
    </cofactor>
    <text evidence="1">There are 2 Zn(2+) ions per monomer; Zn(2+) and CoA bind inbetween the 2 domains in each monomer.</text>
</comment>
<comment type="pathway">
    <text>Polyol metabolism; 1,2-propanediol degradation.</text>
</comment>
<comment type="subcellular location">
    <subcellularLocation>
        <location evidence="2">Bacterial microcompartment</location>
    </subcellularLocation>
</comment>
<comment type="domain">
    <text evidence="1">Formed by 2 beta-barrels, each is capped on both ends by short alpha-helices.</text>
</comment>
<comment type="similarity">
    <text evidence="3">Belongs to the PduL family.</text>
</comment>
<feature type="chain" id="PRO_0000407705" description="Phosphate propanoyltransferase">
    <location>
        <begin position="1"/>
        <end position="208"/>
    </location>
</feature>
<feature type="binding site" evidence="1">
    <location>
        <begin position="27"/>
        <end position="29"/>
    </location>
    <ligand>
        <name>CoA</name>
        <dbReference type="ChEBI" id="CHEBI:57287"/>
    </ligand>
</feature>
<feature type="binding site" evidence="1">
    <location>
        <position position="31"/>
    </location>
    <ligand>
        <name>Zn(2+)</name>
        <dbReference type="ChEBI" id="CHEBI:29105"/>
        <label>1</label>
    </ligand>
</feature>
<feature type="binding site" evidence="1">
    <location>
        <position position="33"/>
    </location>
    <ligand>
        <name>Zn(2+)</name>
        <dbReference type="ChEBI" id="CHEBI:29105"/>
        <label>1</label>
    </ligand>
</feature>
<feature type="binding site" evidence="1">
    <location>
        <position position="72"/>
    </location>
    <ligand>
        <name>CoA</name>
        <dbReference type="ChEBI" id="CHEBI:57287"/>
    </ligand>
</feature>
<feature type="binding site" evidence="1">
    <location>
        <position position="79"/>
    </location>
    <ligand>
        <name>CoA</name>
        <dbReference type="ChEBI" id="CHEBI:57287"/>
    </ligand>
</feature>
<feature type="binding site" evidence="1">
    <location>
        <position position="85"/>
    </location>
    <ligand>
        <name>phosphate</name>
        <dbReference type="ChEBI" id="CHEBI:43474"/>
    </ligand>
</feature>
<feature type="binding site" evidence="1">
    <location>
        <position position="91"/>
    </location>
    <ligand>
        <name>Zn(2+)</name>
        <dbReference type="ChEBI" id="CHEBI:29105"/>
        <label>1</label>
    </ligand>
</feature>
<feature type="binding site" evidence="1">
    <location>
        <position position="138"/>
    </location>
    <ligand>
        <name>Zn(2+)</name>
        <dbReference type="ChEBI" id="CHEBI:29105"/>
        <label>2</label>
    </ligand>
</feature>
<feature type="binding site" evidence="1">
    <location>
        <position position="140"/>
    </location>
    <ligand>
        <name>Zn(2+)</name>
        <dbReference type="ChEBI" id="CHEBI:29105"/>
        <label>2</label>
    </ligand>
</feature>
<feature type="binding site" evidence="1">
    <location>
        <position position="186"/>
    </location>
    <ligand>
        <name>Zn(2+)</name>
        <dbReference type="ChEBI" id="CHEBI:29105"/>
        <label>2</label>
    </ligand>
</feature>
<feature type="binding site" evidence="1">
    <location>
        <position position="193"/>
    </location>
    <ligand>
        <name>CoA</name>
        <dbReference type="ChEBI" id="CHEBI:57287"/>
    </ligand>
</feature>
<evidence type="ECO:0000250" key="1">
    <source>
        <dbReference type="UniProtKB" id="Q21A54"/>
    </source>
</evidence>
<evidence type="ECO:0000250" key="2">
    <source>
        <dbReference type="UniProtKB" id="Q9XDN5"/>
    </source>
</evidence>
<evidence type="ECO:0000305" key="3"/>
<accession>Q03Q37</accession>